<evidence type="ECO:0000255" key="1">
    <source>
        <dbReference type="HAMAP-Rule" id="MF_00791"/>
    </source>
</evidence>
<proteinExistence type="inferred from homology"/>
<feature type="chain" id="PRO_1000083604" description="Protein ApaG">
    <location>
        <begin position="1"/>
        <end position="130"/>
    </location>
</feature>
<feature type="domain" description="ApaG" evidence="1">
    <location>
        <begin position="3"/>
        <end position="127"/>
    </location>
</feature>
<sequence>MYRATTRKIQVTATPRYVAERSEPDQGRHFWAYTIEVVNLGKVSVQLKSRHWVITDAHGHVEEVHGAGVVGEEPVLPPGGRFEYTSGVPLSTPTGIMSGHYDMLAETGETFSVEVPAFSLDVPHMARILN</sequence>
<reference key="1">
    <citation type="submission" date="2007-04" db="EMBL/GenBank/DDBJ databases">
        <title>Complete genome sequence of the nitrogen-fixing bacterium Azorhizobium caulinodans ORS571.</title>
        <authorList>
            <person name="Lee K.B."/>
            <person name="Backer P.D."/>
            <person name="Aono T."/>
            <person name="Liu C.T."/>
            <person name="Suzuki S."/>
            <person name="Suzuki T."/>
            <person name="Kaneko T."/>
            <person name="Yamada M."/>
            <person name="Tabata S."/>
            <person name="Kupfer D.M."/>
            <person name="Najar F.Z."/>
            <person name="Wiley G.B."/>
            <person name="Roe B."/>
            <person name="Binnewies T."/>
            <person name="Ussery D."/>
            <person name="Vereecke D."/>
            <person name="Gevers D."/>
            <person name="Holsters M."/>
            <person name="Oyaizu H."/>
        </authorList>
    </citation>
    <scope>NUCLEOTIDE SEQUENCE [LARGE SCALE GENOMIC DNA]</scope>
    <source>
        <strain>ATCC 43989 / DSM 5975 / JCM 20966 / LMG 6465 / NBRC 14845 / NCIMB 13405 / ORS 571</strain>
    </source>
</reference>
<name>APAG_AZOC5</name>
<keyword id="KW-1185">Reference proteome</keyword>
<organism>
    <name type="scientific">Azorhizobium caulinodans (strain ATCC 43989 / DSM 5975 / JCM 20966 / LMG 6465 / NBRC 14845 / NCIMB 13405 / ORS 571)</name>
    <dbReference type="NCBI Taxonomy" id="438753"/>
    <lineage>
        <taxon>Bacteria</taxon>
        <taxon>Pseudomonadati</taxon>
        <taxon>Pseudomonadota</taxon>
        <taxon>Alphaproteobacteria</taxon>
        <taxon>Hyphomicrobiales</taxon>
        <taxon>Xanthobacteraceae</taxon>
        <taxon>Azorhizobium</taxon>
    </lineage>
</organism>
<gene>
    <name evidence="1" type="primary">apaG</name>
    <name type="ordered locus">AZC_4024</name>
</gene>
<dbReference type="EMBL" id="AP009384">
    <property type="protein sequence ID" value="BAF90022.1"/>
    <property type="molecule type" value="Genomic_DNA"/>
</dbReference>
<dbReference type="RefSeq" id="WP_012172544.1">
    <property type="nucleotide sequence ID" value="NC_009937.1"/>
</dbReference>
<dbReference type="SMR" id="A8ILE7"/>
<dbReference type="STRING" id="438753.AZC_4024"/>
<dbReference type="KEGG" id="azc:AZC_4024"/>
<dbReference type="eggNOG" id="COG2967">
    <property type="taxonomic scope" value="Bacteria"/>
</dbReference>
<dbReference type="HOGENOM" id="CLU_128074_1_0_5"/>
<dbReference type="Proteomes" id="UP000000270">
    <property type="component" value="Chromosome"/>
</dbReference>
<dbReference type="GO" id="GO:0070987">
    <property type="term" value="P:error-free translesion synthesis"/>
    <property type="evidence" value="ECO:0007669"/>
    <property type="project" value="TreeGrafter"/>
</dbReference>
<dbReference type="Gene3D" id="2.60.40.1470">
    <property type="entry name" value="ApaG domain"/>
    <property type="match status" value="1"/>
</dbReference>
<dbReference type="HAMAP" id="MF_00791">
    <property type="entry name" value="ApaG"/>
    <property type="match status" value="1"/>
</dbReference>
<dbReference type="InterPro" id="IPR007474">
    <property type="entry name" value="ApaG_domain"/>
</dbReference>
<dbReference type="InterPro" id="IPR036767">
    <property type="entry name" value="ApaG_sf"/>
</dbReference>
<dbReference type="InterPro" id="IPR023065">
    <property type="entry name" value="Uncharacterised_ApaG"/>
</dbReference>
<dbReference type="NCBIfam" id="NF003967">
    <property type="entry name" value="PRK05461.1"/>
    <property type="match status" value="1"/>
</dbReference>
<dbReference type="PANTHER" id="PTHR14289">
    <property type="entry name" value="F-BOX ONLY PROTEIN 3"/>
    <property type="match status" value="1"/>
</dbReference>
<dbReference type="PANTHER" id="PTHR14289:SF16">
    <property type="entry name" value="POLYMERASE DELTA-INTERACTING PROTEIN 2"/>
    <property type="match status" value="1"/>
</dbReference>
<dbReference type="Pfam" id="PF04379">
    <property type="entry name" value="DUF525"/>
    <property type="match status" value="1"/>
</dbReference>
<dbReference type="SUPFAM" id="SSF110069">
    <property type="entry name" value="ApaG-like"/>
    <property type="match status" value="1"/>
</dbReference>
<dbReference type="PROSITE" id="PS51087">
    <property type="entry name" value="APAG"/>
    <property type="match status" value="1"/>
</dbReference>
<protein>
    <recommendedName>
        <fullName evidence="1">Protein ApaG</fullName>
    </recommendedName>
</protein>
<accession>A8ILE7</accession>